<sequence length="525" mass="58633">MDFTEAYADTCSTVGLAAREGNVKVLRKLLKKGRSIDVADNRGWMPIHEASYHNSVECLRMLIRADSSENYIKTKTFEGFCALHLAASQGHWKIIQILLEAGADPNATTLEETTPLFLAVENGQIDVLRLLLRYGANVNGSHSMCGWNALHQASFQGNAEIIKLLLKKGANKECQDDFGITPLFVAAQYGKLESLSILISSGADVNCQALDKATPLFIAAQEGHTECVELLLSSGADPDLYCNEDNWQLPIHAAAQMGHTKILDLLIPLTNRVCDTGPNKVSPVYSAVLGGHEECLEMLLQSGYSPDAQMCLVFGFSSPLCMAFQKDCDFFGIVNILLKYGAQLNELHLAYCLKYERFSVFRYFLKKCCPSTPWDHISEFINHAIKAQTKYKEWLPSLLLAGFDPLNLLCSSWIDSVSDDILIFTLEFTNWRRLPPAVEKMLSARASNSSWALQQHIASVPSLTHLCRLEIWSHLKLEHLQSDGFIRQLPLPRSLHDYLLYAEVLRMNEVPELAVFQDGEISETT</sequence>
<name>ASB3_BOVIN</name>
<keyword id="KW-0040">ANK repeat</keyword>
<keyword id="KW-1185">Reference proteome</keyword>
<keyword id="KW-0677">Repeat</keyword>
<keyword id="KW-0833">Ubl conjugation pathway</keyword>
<reference key="1">
    <citation type="submission" date="2006-09" db="EMBL/GenBank/DDBJ databases">
        <authorList>
            <consortium name="NIH - Mammalian Gene Collection (MGC) project"/>
        </authorList>
    </citation>
    <scope>NUCLEOTIDE SEQUENCE [LARGE SCALE MRNA]</scope>
    <source>
        <strain>Hereford</strain>
        <tissue>Fetal pons</tissue>
    </source>
</reference>
<accession>Q08DV6</accession>
<dbReference type="EMBL" id="BC123548">
    <property type="protein sequence ID" value="AAI23549.1"/>
    <property type="molecule type" value="mRNA"/>
</dbReference>
<dbReference type="RefSeq" id="NP_001070395.1">
    <property type="nucleotide sequence ID" value="NM_001076927.1"/>
</dbReference>
<dbReference type="SMR" id="Q08DV6"/>
<dbReference type="FunCoup" id="Q08DV6">
    <property type="interactions" value="2206"/>
</dbReference>
<dbReference type="STRING" id="9913.ENSBTAP00000025921"/>
<dbReference type="PaxDb" id="9913-ENSBTAP00000025921"/>
<dbReference type="GeneID" id="540802"/>
<dbReference type="KEGG" id="bta:540802"/>
<dbReference type="CTD" id="51130"/>
<dbReference type="eggNOG" id="KOG0504">
    <property type="taxonomic scope" value="Eukaryota"/>
</dbReference>
<dbReference type="InParanoid" id="Q08DV6"/>
<dbReference type="OrthoDB" id="194358at2759"/>
<dbReference type="UniPathway" id="UPA00143"/>
<dbReference type="Proteomes" id="UP000009136">
    <property type="component" value="Unplaced"/>
</dbReference>
<dbReference type="GO" id="GO:0035556">
    <property type="term" value="P:intracellular signal transduction"/>
    <property type="evidence" value="ECO:0007669"/>
    <property type="project" value="InterPro"/>
</dbReference>
<dbReference type="GO" id="GO:0016567">
    <property type="term" value="P:protein ubiquitination"/>
    <property type="evidence" value="ECO:0007669"/>
    <property type="project" value="UniProtKB-UniPathway"/>
</dbReference>
<dbReference type="CDD" id="cd03722">
    <property type="entry name" value="SOCS_ASB3"/>
    <property type="match status" value="1"/>
</dbReference>
<dbReference type="FunFam" id="1.10.750.20:FF:000001">
    <property type="entry name" value="Ankyrin repeat and SOCS box containing 1"/>
    <property type="match status" value="1"/>
</dbReference>
<dbReference type="FunFam" id="1.25.40.20:FF:000171">
    <property type="entry name" value="Ankyrin repeat and SOCS box containing 3"/>
    <property type="match status" value="1"/>
</dbReference>
<dbReference type="FunFam" id="1.25.40.20:FF:000223">
    <property type="entry name" value="ankyrin repeat and SOCS box protein 3 isoform X1"/>
    <property type="match status" value="1"/>
</dbReference>
<dbReference type="Gene3D" id="1.25.40.20">
    <property type="entry name" value="Ankyrin repeat-containing domain"/>
    <property type="match status" value="2"/>
</dbReference>
<dbReference type="Gene3D" id="1.10.750.20">
    <property type="entry name" value="SOCS box"/>
    <property type="match status" value="1"/>
</dbReference>
<dbReference type="InterPro" id="IPR002110">
    <property type="entry name" value="Ankyrin_rpt"/>
</dbReference>
<dbReference type="InterPro" id="IPR036770">
    <property type="entry name" value="Ankyrin_rpt-contain_sf"/>
</dbReference>
<dbReference type="InterPro" id="IPR037329">
    <property type="entry name" value="ASB3_SOCS"/>
</dbReference>
<dbReference type="InterPro" id="IPR001496">
    <property type="entry name" value="SOCS_box"/>
</dbReference>
<dbReference type="InterPro" id="IPR036036">
    <property type="entry name" value="SOCS_box-like_dom_sf"/>
</dbReference>
<dbReference type="PANTHER" id="PTHR24198">
    <property type="entry name" value="ANKYRIN REPEAT AND PROTEIN KINASE DOMAIN-CONTAINING PROTEIN"/>
    <property type="match status" value="1"/>
</dbReference>
<dbReference type="PANTHER" id="PTHR24198:SF184">
    <property type="entry name" value="ANKYRIN REPEAT AND SOCS BOX CONTAINING 3"/>
    <property type="match status" value="1"/>
</dbReference>
<dbReference type="Pfam" id="PF00023">
    <property type="entry name" value="Ank"/>
    <property type="match status" value="1"/>
</dbReference>
<dbReference type="Pfam" id="PF12796">
    <property type="entry name" value="Ank_2"/>
    <property type="match status" value="3"/>
</dbReference>
<dbReference type="Pfam" id="PF07525">
    <property type="entry name" value="SOCS_box"/>
    <property type="match status" value="1"/>
</dbReference>
<dbReference type="PRINTS" id="PR01415">
    <property type="entry name" value="ANKYRIN"/>
</dbReference>
<dbReference type="SMART" id="SM00248">
    <property type="entry name" value="ANK"/>
    <property type="match status" value="10"/>
</dbReference>
<dbReference type="SMART" id="SM00969">
    <property type="entry name" value="SOCS_box"/>
    <property type="match status" value="1"/>
</dbReference>
<dbReference type="SUPFAM" id="SSF48403">
    <property type="entry name" value="Ankyrin repeat"/>
    <property type="match status" value="2"/>
</dbReference>
<dbReference type="SUPFAM" id="SSF158235">
    <property type="entry name" value="SOCS box-like"/>
    <property type="match status" value="1"/>
</dbReference>
<dbReference type="PROSITE" id="PS50297">
    <property type="entry name" value="ANK_REP_REGION"/>
    <property type="match status" value="1"/>
</dbReference>
<dbReference type="PROSITE" id="PS50088">
    <property type="entry name" value="ANK_REPEAT"/>
    <property type="match status" value="6"/>
</dbReference>
<dbReference type="PROSITE" id="PS50225">
    <property type="entry name" value="SOCS"/>
    <property type="match status" value="1"/>
</dbReference>
<organism>
    <name type="scientific">Bos taurus</name>
    <name type="common">Bovine</name>
    <dbReference type="NCBI Taxonomy" id="9913"/>
    <lineage>
        <taxon>Eukaryota</taxon>
        <taxon>Metazoa</taxon>
        <taxon>Chordata</taxon>
        <taxon>Craniata</taxon>
        <taxon>Vertebrata</taxon>
        <taxon>Euteleostomi</taxon>
        <taxon>Mammalia</taxon>
        <taxon>Eutheria</taxon>
        <taxon>Laurasiatheria</taxon>
        <taxon>Artiodactyla</taxon>
        <taxon>Ruminantia</taxon>
        <taxon>Pecora</taxon>
        <taxon>Bovidae</taxon>
        <taxon>Bovinae</taxon>
        <taxon>Bos</taxon>
    </lineage>
</organism>
<evidence type="ECO:0000250" key="1"/>
<evidence type="ECO:0000255" key="2">
    <source>
        <dbReference type="PROSITE-ProRule" id="PRU00194"/>
    </source>
</evidence>
<evidence type="ECO:0000305" key="3"/>
<proteinExistence type="evidence at transcript level"/>
<gene>
    <name type="primary">ASB3</name>
</gene>
<comment type="function">
    <text evidence="1">Probable substrate-recognition component of a SCF-like ECS (Elongin-Cullin-SOCS-box protein) E3 ubiquitin-protein ligase complex which mediates the ubiquitination and subsequent proteasomal degradation of target proteins. Recognizes TNFRSF1B (By similarity).</text>
</comment>
<comment type="pathway">
    <text>Protein modification; protein ubiquitination.</text>
</comment>
<comment type="subunit">
    <text evidence="1">Interacts with ELOB and TNFRSF1B.</text>
</comment>
<comment type="domain">
    <text evidence="1">The SOCS box domain mediates the interaction with the Elongin BC complex, an adapter module in different E3 ubiquitin-protein ligase complexes.</text>
</comment>
<comment type="similarity">
    <text evidence="3">Belongs to the ankyrin SOCS box (ASB) family.</text>
</comment>
<protein>
    <recommendedName>
        <fullName>Ankyrin repeat and SOCS box protein 3</fullName>
        <shortName>ASB-3</shortName>
    </recommendedName>
</protein>
<feature type="chain" id="PRO_0000283059" description="Ankyrin repeat and SOCS box protein 3">
    <location>
        <begin position="1"/>
        <end position="525"/>
    </location>
</feature>
<feature type="repeat" description="ANK 1">
    <location>
        <begin position="9"/>
        <end position="38"/>
    </location>
</feature>
<feature type="repeat" description="ANK 2">
    <location>
        <begin position="42"/>
        <end position="71"/>
    </location>
</feature>
<feature type="repeat" description="ANK 3">
    <location>
        <begin position="78"/>
        <end position="107"/>
    </location>
</feature>
<feature type="repeat" description="ANK 4">
    <location>
        <begin position="111"/>
        <end position="140"/>
    </location>
</feature>
<feature type="repeat" description="ANK 5">
    <location>
        <begin position="145"/>
        <end position="174"/>
    </location>
</feature>
<feature type="repeat" description="ANK 6">
    <location>
        <begin position="178"/>
        <end position="207"/>
    </location>
</feature>
<feature type="repeat" description="ANK 7">
    <location>
        <begin position="211"/>
        <end position="240"/>
    </location>
</feature>
<feature type="repeat" description="ANK 8">
    <location>
        <begin position="246"/>
        <end position="275"/>
    </location>
</feature>
<feature type="repeat" description="ANK 9">
    <location>
        <begin position="279"/>
        <end position="308"/>
    </location>
</feature>
<feature type="repeat" description="ANK 10">
    <location>
        <begin position="315"/>
        <end position="346"/>
    </location>
</feature>
<feature type="repeat" description="ANK 11">
    <location>
        <begin position="348"/>
        <end position="373"/>
    </location>
</feature>
<feature type="domain" description="SOCS box" evidence="2">
    <location>
        <begin position="441"/>
        <end position="505"/>
    </location>
</feature>